<feature type="chain" id="PRO_1000196689" description="S-adenosylmethionine synthase">
    <location>
        <begin position="1"/>
        <end position="399"/>
    </location>
</feature>
<feature type="region of interest" description="Flexible loop" evidence="1">
    <location>
        <begin position="101"/>
        <end position="111"/>
    </location>
</feature>
<feature type="binding site" description="in other chain" evidence="1">
    <location>
        <position position="17"/>
    </location>
    <ligand>
        <name>ATP</name>
        <dbReference type="ChEBI" id="CHEBI:30616"/>
        <note>ligand shared between two neighboring subunits</note>
    </ligand>
</feature>
<feature type="binding site" evidence="1">
    <location>
        <position position="19"/>
    </location>
    <ligand>
        <name>Mg(2+)</name>
        <dbReference type="ChEBI" id="CHEBI:18420"/>
    </ligand>
</feature>
<feature type="binding site" evidence="1">
    <location>
        <position position="45"/>
    </location>
    <ligand>
        <name>K(+)</name>
        <dbReference type="ChEBI" id="CHEBI:29103"/>
    </ligand>
</feature>
<feature type="binding site" description="in other chain" evidence="1">
    <location>
        <position position="58"/>
    </location>
    <ligand>
        <name>L-methionine</name>
        <dbReference type="ChEBI" id="CHEBI:57844"/>
        <note>ligand shared between two neighboring subunits</note>
    </ligand>
</feature>
<feature type="binding site" description="in other chain" evidence="1">
    <location>
        <position position="101"/>
    </location>
    <ligand>
        <name>L-methionine</name>
        <dbReference type="ChEBI" id="CHEBI:57844"/>
        <note>ligand shared between two neighboring subunits</note>
    </ligand>
</feature>
<feature type="binding site" description="in other chain" evidence="1">
    <location>
        <begin position="177"/>
        <end position="179"/>
    </location>
    <ligand>
        <name>ATP</name>
        <dbReference type="ChEBI" id="CHEBI:30616"/>
        <note>ligand shared between two neighboring subunits</note>
    </ligand>
</feature>
<feature type="binding site" description="in other chain" evidence="1">
    <location>
        <begin position="244"/>
        <end position="245"/>
    </location>
    <ligand>
        <name>ATP</name>
        <dbReference type="ChEBI" id="CHEBI:30616"/>
        <note>ligand shared between two neighboring subunits</note>
    </ligand>
</feature>
<feature type="binding site" evidence="1">
    <location>
        <position position="253"/>
    </location>
    <ligand>
        <name>ATP</name>
        <dbReference type="ChEBI" id="CHEBI:30616"/>
        <note>ligand shared between two neighboring subunits</note>
    </ligand>
</feature>
<feature type="binding site" evidence="1">
    <location>
        <position position="253"/>
    </location>
    <ligand>
        <name>L-methionine</name>
        <dbReference type="ChEBI" id="CHEBI:57844"/>
        <note>ligand shared between two neighboring subunits</note>
    </ligand>
</feature>
<feature type="binding site" description="in other chain" evidence="1">
    <location>
        <begin position="259"/>
        <end position="260"/>
    </location>
    <ligand>
        <name>ATP</name>
        <dbReference type="ChEBI" id="CHEBI:30616"/>
        <note>ligand shared between two neighboring subunits</note>
    </ligand>
</feature>
<feature type="binding site" evidence="1">
    <location>
        <position position="276"/>
    </location>
    <ligand>
        <name>ATP</name>
        <dbReference type="ChEBI" id="CHEBI:30616"/>
        <note>ligand shared between two neighboring subunits</note>
    </ligand>
</feature>
<feature type="binding site" evidence="1">
    <location>
        <position position="280"/>
    </location>
    <ligand>
        <name>ATP</name>
        <dbReference type="ChEBI" id="CHEBI:30616"/>
        <note>ligand shared between two neighboring subunits</note>
    </ligand>
</feature>
<feature type="binding site" description="in other chain" evidence="1">
    <location>
        <position position="284"/>
    </location>
    <ligand>
        <name>L-methionine</name>
        <dbReference type="ChEBI" id="CHEBI:57844"/>
        <note>ligand shared between two neighboring subunits</note>
    </ligand>
</feature>
<protein>
    <recommendedName>
        <fullName evidence="1">S-adenosylmethionine synthase</fullName>
        <shortName evidence="1">AdoMet synthase</shortName>
        <ecNumber evidence="1">2.5.1.6</ecNumber>
    </recommendedName>
    <alternativeName>
        <fullName evidence="1">MAT</fullName>
    </alternativeName>
    <alternativeName>
        <fullName evidence="1">Methionine adenosyltransferase</fullName>
    </alternativeName>
</protein>
<accession>B9J265</accession>
<sequence length="399" mass="43263">MTKKRHLFTSESVTEGHPDKICDQISDSILDAILSKDANARVACETTVTTGLVLVAGEITTSTYVDIPKIVRETIQGIGYTRAKYGFDAETCAVLTSIDEQSADIAMGVDQALEAREGQMTDAEIEAIGAGDQGLMFGFACNETQELMPLPISLAHKLARRLTEVRKNDTLSYLRPDGKTQVTVEYDENGKPVRVDTIVISTQHHPDVTWEEIDRDLKEHVIKAVVPAELIDGETKFFINPTGRFVIGGPQGDAGLTGRKIIVDTYGGYARHGGGAFSGKDATKVDRSAAYAARYVAKNIVAAGLAEKAEVQLAYAIGVAQPVSISVDTFGTGKVSEDVLVELVRNNFDLRPAGIIKMLDLRRPIYKQTAAYGHFGRTDVDLSWERTDKAAALKEQAGL</sequence>
<name>METK_BACCQ</name>
<keyword id="KW-0067">ATP-binding</keyword>
<keyword id="KW-0963">Cytoplasm</keyword>
<keyword id="KW-0460">Magnesium</keyword>
<keyword id="KW-0479">Metal-binding</keyword>
<keyword id="KW-0547">Nucleotide-binding</keyword>
<keyword id="KW-0554">One-carbon metabolism</keyword>
<keyword id="KW-0630">Potassium</keyword>
<keyword id="KW-0808">Transferase</keyword>
<dbReference type="EC" id="2.5.1.6" evidence="1"/>
<dbReference type="EMBL" id="CP000227">
    <property type="protein sequence ID" value="ACM15008.1"/>
    <property type="molecule type" value="Genomic_DNA"/>
</dbReference>
<dbReference type="SMR" id="B9J265"/>
<dbReference type="KEGG" id="bcq:BCQ_4582"/>
<dbReference type="HOGENOM" id="CLU_041802_1_1_9"/>
<dbReference type="UniPathway" id="UPA00315">
    <property type="reaction ID" value="UER00080"/>
</dbReference>
<dbReference type="Proteomes" id="UP000000441">
    <property type="component" value="Chromosome"/>
</dbReference>
<dbReference type="GO" id="GO:0005737">
    <property type="term" value="C:cytoplasm"/>
    <property type="evidence" value="ECO:0007669"/>
    <property type="project" value="UniProtKB-SubCell"/>
</dbReference>
<dbReference type="GO" id="GO:0005524">
    <property type="term" value="F:ATP binding"/>
    <property type="evidence" value="ECO:0007669"/>
    <property type="project" value="UniProtKB-UniRule"/>
</dbReference>
<dbReference type="GO" id="GO:0000287">
    <property type="term" value="F:magnesium ion binding"/>
    <property type="evidence" value="ECO:0007669"/>
    <property type="project" value="UniProtKB-UniRule"/>
</dbReference>
<dbReference type="GO" id="GO:0004478">
    <property type="term" value="F:methionine adenosyltransferase activity"/>
    <property type="evidence" value="ECO:0007669"/>
    <property type="project" value="UniProtKB-UniRule"/>
</dbReference>
<dbReference type="GO" id="GO:0006730">
    <property type="term" value="P:one-carbon metabolic process"/>
    <property type="evidence" value="ECO:0007669"/>
    <property type="project" value="UniProtKB-KW"/>
</dbReference>
<dbReference type="GO" id="GO:0006556">
    <property type="term" value="P:S-adenosylmethionine biosynthetic process"/>
    <property type="evidence" value="ECO:0007669"/>
    <property type="project" value="UniProtKB-UniRule"/>
</dbReference>
<dbReference type="CDD" id="cd18079">
    <property type="entry name" value="S-AdoMet_synt"/>
    <property type="match status" value="1"/>
</dbReference>
<dbReference type="FunFam" id="3.30.300.10:FF:000003">
    <property type="entry name" value="S-adenosylmethionine synthase"/>
    <property type="match status" value="1"/>
</dbReference>
<dbReference type="FunFam" id="3.30.300.10:FF:000004">
    <property type="entry name" value="S-adenosylmethionine synthase"/>
    <property type="match status" value="1"/>
</dbReference>
<dbReference type="Gene3D" id="3.30.300.10">
    <property type="match status" value="3"/>
</dbReference>
<dbReference type="HAMAP" id="MF_00086">
    <property type="entry name" value="S_AdoMet_synth1"/>
    <property type="match status" value="1"/>
</dbReference>
<dbReference type="InterPro" id="IPR022631">
    <property type="entry name" value="ADOMET_SYNTHASE_CS"/>
</dbReference>
<dbReference type="InterPro" id="IPR022630">
    <property type="entry name" value="S-AdoMet_synt_C"/>
</dbReference>
<dbReference type="InterPro" id="IPR022629">
    <property type="entry name" value="S-AdoMet_synt_central"/>
</dbReference>
<dbReference type="InterPro" id="IPR022628">
    <property type="entry name" value="S-AdoMet_synt_N"/>
</dbReference>
<dbReference type="InterPro" id="IPR002133">
    <property type="entry name" value="S-AdoMet_synthetase"/>
</dbReference>
<dbReference type="InterPro" id="IPR022636">
    <property type="entry name" value="S-AdoMet_synthetase_sfam"/>
</dbReference>
<dbReference type="NCBIfam" id="TIGR01034">
    <property type="entry name" value="metK"/>
    <property type="match status" value="1"/>
</dbReference>
<dbReference type="PANTHER" id="PTHR11964">
    <property type="entry name" value="S-ADENOSYLMETHIONINE SYNTHETASE"/>
    <property type="match status" value="1"/>
</dbReference>
<dbReference type="Pfam" id="PF02773">
    <property type="entry name" value="S-AdoMet_synt_C"/>
    <property type="match status" value="1"/>
</dbReference>
<dbReference type="Pfam" id="PF02772">
    <property type="entry name" value="S-AdoMet_synt_M"/>
    <property type="match status" value="1"/>
</dbReference>
<dbReference type="Pfam" id="PF00438">
    <property type="entry name" value="S-AdoMet_synt_N"/>
    <property type="match status" value="1"/>
</dbReference>
<dbReference type="PIRSF" id="PIRSF000497">
    <property type="entry name" value="MAT"/>
    <property type="match status" value="1"/>
</dbReference>
<dbReference type="SUPFAM" id="SSF55973">
    <property type="entry name" value="S-adenosylmethionine synthetase"/>
    <property type="match status" value="3"/>
</dbReference>
<dbReference type="PROSITE" id="PS00376">
    <property type="entry name" value="ADOMET_SYNTHASE_1"/>
    <property type="match status" value="1"/>
</dbReference>
<dbReference type="PROSITE" id="PS00377">
    <property type="entry name" value="ADOMET_SYNTHASE_2"/>
    <property type="match status" value="1"/>
</dbReference>
<gene>
    <name evidence="1" type="primary">metK</name>
    <name type="ordered locus">BCQ_4582</name>
</gene>
<comment type="function">
    <text evidence="1">Catalyzes the formation of S-adenosylmethionine (AdoMet) from methionine and ATP. The overall synthetic reaction is composed of two sequential steps, AdoMet formation and the subsequent tripolyphosphate hydrolysis which occurs prior to release of AdoMet from the enzyme.</text>
</comment>
<comment type="catalytic activity">
    <reaction evidence="1">
        <text>L-methionine + ATP + H2O = S-adenosyl-L-methionine + phosphate + diphosphate</text>
        <dbReference type="Rhea" id="RHEA:21080"/>
        <dbReference type="ChEBI" id="CHEBI:15377"/>
        <dbReference type="ChEBI" id="CHEBI:30616"/>
        <dbReference type="ChEBI" id="CHEBI:33019"/>
        <dbReference type="ChEBI" id="CHEBI:43474"/>
        <dbReference type="ChEBI" id="CHEBI:57844"/>
        <dbReference type="ChEBI" id="CHEBI:59789"/>
        <dbReference type="EC" id="2.5.1.6"/>
    </reaction>
</comment>
<comment type="cofactor">
    <cofactor evidence="1">
        <name>Mg(2+)</name>
        <dbReference type="ChEBI" id="CHEBI:18420"/>
    </cofactor>
    <text evidence="1">Binds 2 divalent ions per subunit.</text>
</comment>
<comment type="cofactor">
    <cofactor evidence="1">
        <name>K(+)</name>
        <dbReference type="ChEBI" id="CHEBI:29103"/>
    </cofactor>
    <text evidence="1">Binds 1 potassium ion per subunit.</text>
</comment>
<comment type="pathway">
    <text evidence="1">Amino-acid biosynthesis; S-adenosyl-L-methionine biosynthesis; S-adenosyl-L-methionine from L-methionine: step 1/1.</text>
</comment>
<comment type="subunit">
    <text evidence="1">Homotetramer; dimer of dimers.</text>
</comment>
<comment type="subcellular location">
    <subcellularLocation>
        <location evidence="1">Cytoplasm</location>
    </subcellularLocation>
</comment>
<comment type="similarity">
    <text evidence="1">Belongs to the AdoMet synthase family.</text>
</comment>
<organism>
    <name type="scientific">Bacillus cereus (strain Q1)</name>
    <dbReference type="NCBI Taxonomy" id="361100"/>
    <lineage>
        <taxon>Bacteria</taxon>
        <taxon>Bacillati</taxon>
        <taxon>Bacillota</taxon>
        <taxon>Bacilli</taxon>
        <taxon>Bacillales</taxon>
        <taxon>Bacillaceae</taxon>
        <taxon>Bacillus</taxon>
        <taxon>Bacillus cereus group</taxon>
    </lineage>
</organism>
<evidence type="ECO:0000255" key="1">
    <source>
        <dbReference type="HAMAP-Rule" id="MF_00086"/>
    </source>
</evidence>
<reference key="1">
    <citation type="journal article" date="2009" name="J. Bacteriol.">
        <title>Complete genome sequence of the extremophilic Bacillus cereus strain Q1 with industrial applications.</title>
        <authorList>
            <person name="Xiong Z."/>
            <person name="Jiang Y."/>
            <person name="Qi D."/>
            <person name="Lu H."/>
            <person name="Yang F."/>
            <person name="Yang J."/>
            <person name="Chen L."/>
            <person name="Sun L."/>
            <person name="Xu X."/>
            <person name="Xue Y."/>
            <person name="Zhu Y."/>
            <person name="Jin Q."/>
        </authorList>
    </citation>
    <scope>NUCLEOTIDE SEQUENCE [LARGE SCALE GENOMIC DNA]</scope>
    <source>
        <strain>Q1</strain>
    </source>
</reference>
<proteinExistence type="inferred from homology"/>